<sequence>MKKLAIAGALLLLAGCAEVENYNNVVKTPAPDWLAGYWQTKGPQRALVSPEAIGSLIVTKEGDTLDCRQWQRVIAVPGKLTLMSDDLTNVTVKRELYEVERDGNTIEYDGMTMERVDRPTAECAAALDKAPLPTPLP</sequence>
<gene>
    <name type="primary">yedD</name>
    <name type="ordered locus">b1928</name>
    <name type="ordered locus">JW1913</name>
</gene>
<accession>P31063</accession>
<dbReference type="EMBL" id="L13279">
    <property type="protein sequence ID" value="AAA82576.1"/>
    <property type="molecule type" value="Genomic_DNA"/>
</dbReference>
<dbReference type="EMBL" id="U00096">
    <property type="protein sequence ID" value="AAC74995.1"/>
    <property type="molecule type" value="Genomic_DNA"/>
</dbReference>
<dbReference type="EMBL" id="AP009048">
    <property type="protein sequence ID" value="BAA15756.1"/>
    <property type="molecule type" value="Genomic_DNA"/>
</dbReference>
<dbReference type="PIR" id="E64956">
    <property type="entry name" value="E64956"/>
</dbReference>
<dbReference type="RefSeq" id="NP_416438.1">
    <property type="nucleotide sequence ID" value="NC_000913.3"/>
</dbReference>
<dbReference type="RefSeq" id="WP_001350519.1">
    <property type="nucleotide sequence ID" value="NZ_LN832404.1"/>
</dbReference>
<dbReference type="SMR" id="P31063"/>
<dbReference type="BioGRID" id="4260392">
    <property type="interactions" value="14"/>
</dbReference>
<dbReference type="BioGRID" id="853323">
    <property type="interactions" value="2"/>
</dbReference>
<dbReference type="DIP" id="DIP-11838N"/>
<dbReference type="FunCoup" id="P31063">
    <property type="interactions" value="67"/>
</dbReference>
<dbReference type="IntAct" id="P31063">
    <property type="interactions" value="12"/>
</dbReference>
<dbReference type="STRING" id="511145.b1928"/>
<dbReference type="jPOST" id="P31063"/>
<dbReference type="PaxDb" id="511145-b1928"/>
<dbReference type="EnsemblBacteria" id="AAC74995">
    <property type="protein sequence ID" value="AAC74995"/>
    <property type="gene ID" value="b1928"/>
</dbReference>
<dbReference type="GeneID" id="949082"/>
<dbReference type="KEGG" id="ecj:JW1913"/>
<dbReference type="KEGG" id="eco:b1928"/>
<dbReference type="KEGG" id="ecoc:C3026_10935"/>
<dbReference type="PATRIC" id="fig|1411691.4.peg.321"/>
<dbReference type="EchoBASE" id="EB1611"/>
<dbReference type="eggNOG" id="ENOG502ZQUD">
    <property type="taxonomic scope" value="Bacteria"/>
</dbReference>
<dbReference type="HOGENOM" id="CLU_139754_0_0_6"/>
<dbReference type="InParanoid" id="P31063"/>
<dbReference type="OMA" id="AGYWQSK"/>
<dbReference type="OrthoDB" id="6518935at2"/>
<dbReference type="PhylomeDB" id="P31063"/>
<dbReference type="BioCyc" id="EcoCyc:EG11659-MONOMER"/>
<dbReference type="PRO" id="PR:P31063"/>
<dbReference type="Proteomes" id="UP000000625">
    <property type="component" value="Chromosome"/>
</dbReference>
<dbReference type="GO" id="GO:0005886">
    <property type="term" value="C:plasma membrane"/>
    <property type="evidence" value="ECO:0007669"/>
    <property type="project" value="UniProtKB-SubCell"/>
</dbReference>
<dbReference type="Gene3D" id="2.40.128.500">
    <property type="entry name" value="YedD-like protein"/>
    <property type="match status" value="1"/>
</dbReference>
<dbReference type="InterPro" id="IPR025596">
    <property type="entry name" value="YedD"/>
</dbReference>
<dbReference type="InterPro" id="IPR038624">
    <property type="entry name" value="YedD-like_sf"/>
</dbReference>
<dbReference type="NCBIfam" id="NF007705">
    <property type="entry name" value="PRK10397.1"/>
    <property type="match status" value="1"/>
</dbReference>
<dbReference type="Pfam" id="PF13987">
    <property type="entry name" value="YedD"/>
    <property type="match status" value="1"/>
</dbReference>
<dbReference type="PROSITE" id="PS51257">
    <property type="entry name" value="PROKAR_LIPOPROTEIN"/>
    <property type="match status" value="1"/>
</dbReference>
<evidence type="ECO:0000255" key="1">
    <source>
        <dbReference type="PROSITE-ProRule" id="PRU00303"/>
    </source>
</evidence>
<reference key="1">
    <citation type="journal article" date="1993" name="J. Gen. Microbiol.">
        <title>Organization of the Escherichia coli and Salmonella typhimurium chromosomes between flagellar regions IIIa and IIIb, including a large non-coding region.</title>
        <authorList>
            <person name="Raha M."/>
            <person name="Kihara M."/>
            <person name="Kawagishi I."/>
            <person name="Macnab R.M."/>
        </authorList>
    </citation>
    <scope>NUCLEOTIDE SEQUENCE [GENOMIC DNA]</scope>
    <source>
        <strain>JA11</strain>
    </source>
</reference>
<reference key="2">
    <citation type="journal article" date="1996" name="DNA Res.">
        <title>A 460-kb DNA sequence of the Escherichia coli K-12 genome corresponding to the 40.1-50.0 min region on the linkage map.</title>
        <authorList>
            <person name="Itoh T."/>
            <person name="Aiba H."/>
            <person name="Baba T."/>
            <person name="Fujita K."/>
            <person name="Hayashi K."/>
            <person name="Inada T."/>
            <person name="Isono K."/>
            <person name="Kasai H."/>
            <person name="Kimura S."/>
            <person name="Kitakawa M."/>
            <person name="Kitagawa M."/>
            <person name="Makino K."/>
            <person name="Miki T."/>
            <person name="Mizobuchi K."/>
            <person name="Mori H."/>
            <person name="Mori T."/>
            <person name="Motomura K."/>
            <person name="Nakade S."/>
            <person name="Nakamura Y."/>
            <person name="Nashimoto H."/>
            <person name="Nishio Y."/>
            <person name="Oshima T."/>
            <person name="Saito N."/>
            <person name="Sampei G."/>
            <person name="Seki Y."/>
            <person name="Sivasundaram S."/>
            <person name="Tagami H."/>
            <person name="Takeda J."/>
            <person name="Takemoto K."/>
            <person name="Wada C."/>
            <person name="Yamamoto Y."/>
            <person name="Horiuchi T."/>
        </authorList>
    </citation>
    <scope>NUCLEOTIDE SEQUENCE [LARGE SCALE GENOMIC DNA]</scope>
    <source>
        <strain>K12 / W3110 / ATCC 27325 / DSM 5911</strain>
    </source>
</reference>
<reference key="3">
    <citation type="journal article" date="1997" name="Science">
        <title>The complete genome sequence of Escherichia coli K-12.</title>
        <authorList>
            <person name="Blattner F.R."/>
            <person name="Plunkett G. III"/>
            <person name="Bloch C.A."/>
            <person name="Perna N.T."/>
            <person name="Burland V."/>
            <person name="Riley M."/>
            <person name="Collado-Vides J."/>
            <person name="Glasner J.D."/>
            <person name="Rode C.K."/>
            <person name="Mayhew G.F."/>
            <person name="Gregor J."/>
            <person name="Davis N.W."/>
            <person name="Kirkpatrick H.A."/>
            <person name="Goeden M.A."/>
            <person name="Rose D.J."/>
            <person name="Mau B."/>
            <person name="Shao Y."/>
        </authorList>
    </citation>
    <scope>NUCLEOTIDE SEQUENCE [LARGE SCALE GENOMIC DNA]</scope>
    <source>
        <strain>K12 / MG1655 / ATCC 47076</strain>
    </source>
</reference>
<reference key="4">
    <citation type="journal article" date="2006" name="Mol. Syst. Biol.">
        <title>Highly accurate genome sequences of Escherichia coli K-12 strains MG1655 and W3110.</title>
        <authorList>
            <person name="Hayashi K."/>
            <person name="Morooka N."/>
            <person name="Yamamoto Y."/>
            <person name="Fujita K."/>
            <person name="Isono K."/>
            <person name="Choi S."/>
            <person name="Ohtsubo E."/>
            <person name="Baba T."/>
            <person name="Wanner B.L."/>
            <person name="Mori H."/>
            <person name="Horiuchi T."/>
        </authorList>
    </citation>
    <scope>NUCLEOTIDE SEQUENCE [LARGE SCALE GENOMIC DNA]</scope>
    <source>
        <strain>K12 / W3110 / ATCC 27325 / DSM 5911</strain>
    </source>
</reference>
<keyword id="KW-1003">Cell membrane</keyword>
<keyword id="KW-0449">Lipoprotein</keyword>
<keyword id="KW-0472">Membrane</keyword>
<keyword id="KW-0564">Palmitate</keyword>
<keyword id="KW-1185">Reference proteome</keyword>
<keyword id="KW-0732">Signal</keyword>
<proteinExistence type="inferred from homology"/>
<name>YEDD_ECOLI</name>
<comment type="subcellular location">
    <subcellularLocation>
        <location evidence="1">Cell membrane</location>
        <topology evidence="1">Lipid-anchor</topology>
    </subcellularLocation>
</comment>
<protein>
    <recommendedName>
        <fullName>Uncharacterized lipoprotein YedD</fullName>
    </recommendedName>
</protein>
<organism>
    <name type="scientific">Escherichia coli (strain K12)</name>
    <dbReference type="NCBI Taxonomy" id="83333"/>
    <lineage>
        <taxon>Bacteria</taxon>
        <taxon>Pseudomonadati</taxon>
        <taxon>Pseudomonadota</taxon>
        <taxon>Gammaproteobacteria</taxon>
        <taxon>Enterobacterales</taxon>
        <taxon>Enterobacteriaceae</taxon>
        <taxon>Escherichia</taxon>
    </lineage>
</organism>
<feature type="signal peptide" evidence="1">
    <location>
        <begin position="1"/>
        <end position="15"/>
    </location>
</feature>
<feature type="chain" id="PRO_0000013863" description="Uncharacterized lipoprotein YedD">
    <location>
        <begin position="16"/>
        <end position="137"/>
    </location>
</feature>
<feature type="lipid moiety-binding region" description="N-palmitoyl cysteine" evidence="1">
    <location>
        <position position="16"/>
    </location>
</feature>
<feature type="lipid moiety-binding region" description="S-diacylglycerol cysteine" evidence="1">
    <location>
        <position position="16"/>
    </location>
</feature>